<proteinExistence type="inferred from homology"/>
<feature type="chain" id="PRO_0000381862" description="Polyribonucleotide nucleotidyltransferase">
    <location>
        <begin position="1"/>
        <end position="690"/>
    </location>
</feature>
<feature type="domain" description="KH" evidence="1">
    <location>
        <begin position="549"/>
        <end position="608"/>
    </location>
</feature>
<feature type="domain" description="S1 motif" evidence="1">
    <location>
        <begin position="618"/>
        <end position="686"/>
    </location>
</feature>
<feature type="binding site" evidence="1">
    <location>
        <position position="482"/>
    </location>
    <ligand>
        <name>Mg(2+)</name>
        <dbReference type="ChEBI" id="CHEBI:18420"/>
    </ligand>
</feature>
<feature type="binding site" evidence="1">
    <location>
        <position position="488"/>
    </location>
    <ligand>
        <name>Mg(2+)</name>
        <dbReference type="ChEBI" id="CHEBI:18420"/>
    </ligand>
</feature>
<accession>B7J4D8</accession>
<dbReference type="EC" id="2.7.7.8" evidence="1"/>
<dbReference type="EMBL" id="CP001219">
    <property type="protein sequence ID" value="ACK77914.1"/>
    <property type="molecule type" value="Genomic_DNA"/>
</dbReference>
<dbReference type="RefSeq" id="WP_012606548.1">
    <property type="nucleotide sequence ID" value="NC_011761.1"/>
</dbReference>
<dbReference type="SMR" id="B7J4D8"/>
<dbReference type="STRING" id="243159.AFE_0395"/>
<dbReference type="PaxDb" id="243159-AFE_0395"/>
<dbReference type="GeneID" id="65279771"/>
<dbReference type="KEGG" id="afr:AFE_0395"/>
<dbReference type="eggNOG" id="COG1185">
    <property type="taxonomic scope" value="Bacteria"/>
</dbReference>
<dbReference type="HOGENOM" id="CLU_004217_2_2_6"/>
<dbReference type="Proteomes" id="UP000001362">
    <property type="component" value="Chromosome"/>
</dbReference>
<dbReference type="GO" id="GO:0005829">
    <property type="term" value="C:cytosol"/>
    <property type="evidence" value="ECO:0007669"/>
    <property type="project" value="TreeGrafter"/>
</dbReference>
<dbReference type="GO" id="GO:0000175">
    <property type="term" value="F:3'-5'-RNA exonuclease activity"/>
    <property type="evidence" value="ECO:0007669"/>
    <property type="project" value="TreeGrafter"/>
</dbReference>
<dbReference type="GO" id="GO:0000287">
    <property type="term" value="F:magnesium ion binding"/>
    <property type="evidence" value="ECO:0007669"/>
    <property type="project" value="UniProtKB-UniRule"/>
</dbReference>
<dbReference type="GO" id="GO:0004654">
    <property type="term" value="F:polyribonucleotide nucleotidyltransferase activity"/>
    <property type="evidence" value="ECO:0007669"/>
    <property type="project" value="UniProtKB-UniRule"/>
</dbReference>
<dbReference type="GO" id="GO:0003723">
    <property type="term" value="F:RNA binding"/>
    <property type="evidence" value="ECO:0007669"/>
    <property type="project" value="UniProtKB-UniRule"/>
</dbReference>
<dbReference type="GO" id="GO:0006402">
    <property type="term" value="P:mRNA catabolic process"/>
    <property type="evidence" value="ECO:0007669"/>
    <property type="project" value="UniProtKB-UniRule"/>
</dbReference>
<dbReference type="GO" id="GO:0006396">
    <property type="term" value="P:RNA processing"/>
    <property type="evidence" value="ECO:0007669"/>
    <property type="project" value="InterPro"/>
</dbReference>
<dbReference type="CDD" id="cd02393">
    <property type="entry name" value="KH-I_PNPase"/>
    <property type="match status" value="1"/>
</dbReference>
<dbReference type="CDD" id="cd11363">
    <property type="entry name" value="RNase_PH_PNPase_1"/>
    <property type="match status" value="1"/>
</dbReference>
<dbReference type="CDD" id="cd11364">
    <property type="entry name" value="RNase_PH_PNPase_2"/>
    <property type="match status" value="1"/>
</dbReference>
<dbReference type="CDD" id="cd04472">
    <property type="entry name" value="S1_PNPase"/>
    <property type="match status" value="1"/>
</dbReference>
<dbReference type="FunFam" id="2.40.50.140:FF:000023">
    <property type="entry name" value="Polyribonucleotide nucleotidyltransferase"/>
    <property type="match status" value="1"/>
</dbReference>
<dbReference type="FunFam" id="3.30.1370.10:FF:000001">
    <property type="entry name" value="Polyribonucleotide nucleotidyltransferase"/>
    <property type="match status" value="1"/>
</dbReference>
<dbReference type="FunFam" id="3.30.230.70:FF:000001">
    <property type="entry name" value="Polyribonucleotide nucleotidyltransferase"/>
    <property type="match status" value="1"/>
</dbReference>
<dbReference type="FunFam" id="3.30.230.70:FF:000002">
    <property type="entry name" value="Polyribonucleotide nucleotidyltransferase"/>
    <property type="match status" value="1"/>
</dbReference>
<dbReference type="Gene3D" id="3.30.230.70">
    <property type="entry name" value="GHMP Kinase, N-terminal domain"/>
    <property type="match status" value="2"/>
</dbReference>
<dbReference type="Gene3D" id="3.30.1370.10">
    <property type="entry name" value="K Homology domain, type 1"/>
    <property type="match status" value="1"/>
</dbReference>
<dbReference type="Gene3D" id="2.40.50.140">
    <property type="entry name" value="Nucleic acid-binding proteins"/>
    <property type="match status" value="1"/>
</dbReference>
<dbReference type="HAMAP" id="MF_01595">
    <property type="entry name" value="PNPase"/>
    <property type="match status" value="1"/>
</dbReference>
<dbReference type="InterPro" id="IPR001247">
    <property type="entry name" value="ExoRNase_PH_dom1"/>
</dbReference>
<dbReference type="InterPro" id="IPR015847">
    <property type="entry name" value="ExoRNase_PH_dom2"/>
</dbReference>
<dbReference type="InterPro" id="IPR036345">
    <property type="entry name" value="ExoRNase_PH_dom2_sf"/>
</dbReference>
<dbReference type="InterPro" id="IPR004087">
    <property type="entry name" value="KH_dom"/>
</dbReference>
<dbReference type="InterPro" id="IPR004088">
    <property type="entry name" value="KH_dom_type_1"/>
</dbReference>
<dbReference type="InterPro" id="IPR036612">
    <property type="entry name" value="KH_dom_type_1_sf"/>
</dbReference>
<dbReference type="InterPro" id="IPR012340">
    <property type="entry name" value="NA-bd_OB-fold"/>
</dbReference>
<dbReference type="InterPro" id="IPR012162">
    <property type="entry name" value="PNPase"/>
</dbReference>
<dbReference type="InterPro" id="IPR027408">
    <property type="entry name" value="PNPase/RNase_PH_dom_sf"/>
</dbReference>
<dbReference type="InterPro" id="IPR015848">
    <property type="entry name" value="PNPase_PH_RNA-bd_bac/org-type"/>
</dbReference>
<dbReference type="InterPro" id="IPR020568">
    <property type="entry name" value="Ribosomal_Su5_D2-typ_SF"/>
</dbReference>
<dbReference type="InterPro" id="IPR003029">
    <property type="entry name" value="S1_domain"/>
</dbReference>
<dbReference type="NCBIfam" id="TIGR03591">
    <property type="entry name" value="polynuc_phos"/>
    <property type="match status" value="1"/>
</dbReference>
<dbReference type="NCBIfam" id="NF008805">
    <property type="entry name" value="PRK11824.1"/>
    <property type="match status" value="1"/>
</dbReference>
<dbReference type="PANTHER" id="PTHR11252">
    <property type="entry name" value="POLYRIBONUCLEOTIDE NUCLEOTIDYLTRANSFERASE"/>
    <property type="match status" value="1"/>
</dbReference>
<dbReference type="PANTHER" id="PTHR11252:SF0">
    <property type="entry name" value="POLYRIBONUCLEOTIDE NUCLEOTIDYLTRANSFERASE 1, MITOCHONDRIAL"/>
    <property type="match status" value="1"/>
</dbReference>
<dbReference type="Pfam" id="PF00013">
    <property type="entry name" value="KH_1"/>
    <property type="match status" value="1"/>
</dbReference>
<dbReference type="Pfam" id="PF03726">
    <property type="entry name" value="PNPase"/>
    <property type="match status" value="1"/>
</dbReference>
<dbReference type="Pfam" id="PF01138">
    <property type="entry name" value="RNase_PH"/>
    <property type="match status" value="2"/>
</dbReference>
<dbReference type="Pfam" id="PF03725">
    <property type="entry name" value="RNase_PH_C"/>
    <property type="match status" value="2"/>
</dbReference>
<dbReference type="Pfam" id="PF00575">
    <property type="entry name" value="S1"/>
    <property type="match status" value="1"/>
</dbReference>
<dbReference type="PIRSF" id="PIRSF005499">
    <property type="entry name" value="PNPase"/>
    <property type="match status" value="1"/>
</dbReference>
<dbReference type="SMART" id="SM00322">
    <property type="entry name" value="KH"/>
    <property type="match status" value="1"/>
</dbReference>
<dbReference type="SMART" id="SM00316">
    <property type="entry name" value="S1"/>
    <property type="match status" value="1"/>
</dbReference>
<dbReference type="SUPFAM" id="SSF54791">
    <property type="entry name" value="Eukaryotic type KH-domain (KH-domain type I)"/>
    <property type="match status" value="1"/>
</dbReference>
<dbReference type="SUPFAM" id="SSF50249">
    <property type="entry name" value="Nucleic acid-binding proteins"/>
    <property type="match status" value="1"/>
</dbReference>
<dbReference type="SUPFAM" id="SSF55666">
    <property type="entry name" value="Ribonuclease PH domain 2-like"/>
    <property type="match status" value="2"/>
</dbReference>
<dbReference type="SUPFAM" id="SSF54211">
    <property type="entry name" value="Ribosomal protein S5 domain 2-like"/>
    <property type="match status" value="2"/>
</dbReference>
<dbReference type="PROSITE" id="PS50084">
    <property type="entry name" value="KH_TYPE_1"/>
    <property type="match status" value="1"/>
</dbReference>
<dbReference type="PROSITE" id="PS50126">
    <property type="entry name" value="S1"/>
    <property type="match status" value="1"/>
</dbReference>
<evidence type="ECO:0000255" key="1">
    <source>
        <dbReference type="HAMAP-Rule" id="MF_01595"/>
    </source>
</evidence>
<comment type="function">
    <text evidence="1">Involved in mRNA degradation. Catalyzes the phosphorolysis of single-stranded polyribonucleotides processively in the 3'- to 5'-direction.</text>
</comment>
<comment type="catalytic activity">
    <reaction evidence="1">
        <text>RNA(n+1) + phosphate = RNA(n) + a ribonucleoside 5'-diphosphate</text>
        <dbReference type="Rhea" id="RHEA:22096"/>
        <dbReference type="Rhea" id="RHEA-COMP:14527"/>
        <dbReference type="Rhea" id="RHEA-COMP:17342"/>
        <dbReference type="ChEBI" id="CHEBI:43474"/>
        <dbReference type="ChEBI" id="CHEBI:57930"/>
        <dbReference type="ChEBI" id="CHEBI:140395"/>
        <dbReference type="EC" id="2.7.7.8"/>
    </reaction>
</comment>
<comment type="cofactor">
    <cofactor evidence="1">
        <name>Mg(2+)</name>
        <dbReference type="ChEBI" id="CHEBI:18420"/>
    </cofactor>
</comment>
<comment type="subunit">
    <text evidence="1">Component of the RNA degradosome, which is a multiprotein complex involved in RNA processing and mRNA degradation.</text>
</comment>
<comment type="subcellular location">
    <subcellularLocation>
        <location evidence="1">Cytoplasm</location>
    </subcellularLocation>
</comment>
<comment type="similarity">
    <text evidence="1">Belongs to the polyribonucleotide nucleotidyltransferase family.</text>
</comment>
<sequence length="690" mass="74390">MIRKEVDFGGRRLQLETGRMARQADGAVLVSSGDTVVLVTAVGRREMKPGQDFFPLTVNYQEKAYAAGKIPGGFFKREGRPTEKETLTSRLIDRPIRPLFPKGFMNEVQVIATVVSVDRDNDPDILALVGASAALAVSGIPFNGPIGAARVAYIDGKYVLNPSYAQLTTSQLDLVVAGTRQAVLMVESEAQQLSEEIMLEAVMFGHAQFQPVIETIEALAREAGKPRWEWVAPVADEALGVQVREKATPLLQEAYALTEKQARSKRLEDVQQAMAVEFGSDDAGRGDMVRGLLKKIETGIVRGRILDGAPRIDGRDSKTVRPITIEAGVLPRTHGSALFTRGETQALVVATLGTKGDEQIIDALQGESRDRFMLHYNFPPFSTGETGMVGSPKRREIGHGRLAKRAIAAVLPTDSEFPYSLRVVSEVLESNGSSSMATVCGASLALMDAGVPLKAPVAGVAMGLIKEGARFAVLTDILGDEDHLGDMDFKVAGTEQGVTALQMDIKIDGITREIMAQALQQALAGRLHILGLMNGVLSRGRGELSDYAPRIITIQINPDRIRDVIGPGGKVIRALTEETGATIDIQDNGTVTIASVDGEAGAAAKRRIELLTADVQVDTIYDGKVAKIMDFGAFVTILPGRDGLLHISQISNERVSDVHDHLKEGQAVRVKVLEVDRQGKIKLSMKDIPQ</sequence>
<name>PNP_ACIF2</name>
<reference key="1">
    <citation type="journal article" date="2008" name="BMC Genomics">
        <title>Acidithiobacillus ferrooxidans metabolism: from genome sequence to industrial applications.</title>
        <authorList>
            <person name="Valdes J."/>
            <person name="Pedroso I."/>
            <person name="Quatrini R."/>
            <person name="Dodson R.J."/>
            <person name="Tettelin H."/>
            <person name="Blake R. II"/>
            <person name="Eisen J.A."/>
            <person name="Holmes D.S."/>
        </authorList>
    </citation>
    <scope>NUCLEOTIDE SEQUENCE [LARGE SCALE GENOMIC DNA]</scope>
    <source>
        <strain>ATCC 23270 / DSM 14882 / CIP 104768 / NCIMB 8455</strain>
    </source>
</reference>
<protein>
    <recommendedName>
        <fullName evidence="1">Polyribonucleotide nucleotidyltransferase</fullName>
        <ecNumber evidence="1">2.7.7.8</ecNumber>
    </recommendedName>
    <alternativeName>
        <fullName evidence="1">Polynucleotide phosphorylase</fullName>
        <shortName evidence="1">PNPase</shortName>
    </alternativeName>
</protein>
<organism>
    <name type="scientific">Acidithiobacillus ferrooxidans (strain ATCC 23270 / DSM 14882 / CIP 104768 / NCIMB 8455)</name>
    <name type="common">Ferrobacillus ferrooxidans (strain ATCC 23270)</name>
    <dbReference type="NCBI Taxonomy" id="243159"/>
    <lineage>
        <taxon>Bacteria</taxon>
        <taxon>Pseudomonadati</taxon>
        <taxon>Pseudomonadota</taxon>
        <taxon>Acidithiobacillia</taxon>
        <taxon>Acidithiobacillales</taxon>
        <taxon>Acidithiobacillaceae</taxon>
        <taxon>Acidithiobacillus</taxon>
    </lineage>
</organism>
<keyword id="KW-0963">Cytoplasm</keyword>
<keyword id="KW-0460">Magnesium</keyword>
<keyword id="KW-0479">Metal-binding</keyword>
<keyword id="KW-0548">Nucleotidyltransferase</keyword>
<keyword id="KW-1185">Reference proteome</keyword>
<keyword id="KW-0694">RNA-binding</keyword>
<keyword id="KW-0808">Transferase</keyword>
<gene>
    <name evidence="1" type="primary">pnp</name>
    <name type="ordered locus">AFE_0395</name>
</gene>